<dbReference type="EC" id="2.3.1.181" evidence="1"/>
<dbReference type="EMBL" id="CP000712">
    <property type="protein sequence ID" value="ABQ80796.1"/>
    <property type="molecule type" value="Genomic_DNA"/>
</dbReference>
<dbReference type="SMR" id="A5W9I6"/>
<dbReference type="KEGG" id="ppf:Pput_4676"/>
<dbReference type="eggNOG" id="COG0321">
    <property type="taxonomic scope" value="Bacteria"/>
</dbReference>
<dbReference type="HOGENOM" id="CLU_035168_3_1_6"/>
<dbReference type="UniPathway" id="UPA00538">
    <property type="reaction ID" value="UER00592"/>
</dbReference>
<dbReference type="GO" id="GO:0005737">
    <property type="term" value="C:cytoplasm"/>
    <property type="evidence" value="ECO:0007669"/>
    <property type="project" value="UniProtKB-SubCell"/>
</dbReference>
<dbReference type="GO" id="GO:0033819">
    <property type="term" value="F:lipoyl(octanoyl) transferase activity"/>
    <property type="evidence" value="ECO:0007669"/>
    <property type="project" value="UniProtKB-EC"/>
</dbReference>
<dbReference type="GO" id="GO:0036211">
    <property type="term" value="P:protein modification process"/>
    <property type="evidence" value="ECO:0007669"/>
    <property type="project" value="InterPro"/>
</dbReference>
<dbReference type="CDD" id="cd16444">
    <property type="entry name" value="LipB"/>
    <property type="match status" value="1"/>
</dbReference>
<dbReference type="FunFam" id="3.30.930.10:FF:000020">
    <property type="entry name" value="Octanoyltransferase"/>
    <property type="match status" value="1"/>
</dbReference>
<dbReference type="Gene3D" id="3.30.930.10">
    <property type="entry name" value="Bira Bifunctional Protein, Domain 2"/>
    <property type="match status" value="1"/>
</dbReference>
<dbReference type="HAMAP" id="MF_00013">
    <property type="entry name" value="LipB"/>
    <property type="match status" value="1"/>
</dbReference>
<dbReference type="InterPro" id="IPR045864">
    <property type="entry name" value="aa-tRNA-synth_II/BPL/LPL"/>
</dbReference>
<dbReference type="InterPro" id="IPR004143">
    <property type="entry name" value="BPL_LPL_catalytic"/>
</dbReference>
<dbReference type="InterPro" id="IPR000544">
    <property type="entry name" value="Octanoyltransferase"/>
</dbReference>
<dbReference type="InterPro" id="IPR020605">
    <property type="entry name" value="Octanoyltransferase_CS"/>
</dbReference>
<dbReference type="NCBIfam" id="TIGR00214">
    <property type="entry name" value="lipB"/>
    <property type="match status" value="1"/>
</dbReference>
<dbReference type="NCBIfam" id="NF010922">
    <property type="entry name" value="PRK14342.1"/>
    <property type="match status" value="1"/>
</dbReference>
<dbReference type="PANTHER" id="PTHR10993:SF7">
    <property type="entry name" value="LIPOYLTRANSFERASE 2, MITOCHONDRIAL-RELATED"/>
    <property type="match status" value="1"/>
</dbReference>
<dbReference type="PANTHER" id="PTHR10993">
    <property type="entry name" value="OCTANOYLTRANSFERASE"/>
    <property type="match status" value="1"/>
</dbReference>
<dbReference type="Pfam" id="PF21948">
    <property type="entry name" value="LplA-B_cat"/>
    <property type="match status" value="1"/>
</dbReference>
<dbReference type="PIRSF" id="PIRSF016262">
    <property type="entry name" value="LPLase"/>
    <property type="match status" value="1"/>
</dbReference>
<dbReference type="SUPFAM" id="SSF55681">
    <property type="entry name" value="Class II aaRS and biotin synthetases"/>
    <property type="match status" value="1"/>
</dbReference>
<dbReference type="PROSITE" id="PS51733">
    <property type="entry name" value="BPL_LPL_CATALYTIC"/>
    <property type="match status" value="1"/>
</dbReference>
<dbReference type="PROSITE" id="PS01313">
    <property type="entry name" value="LIPB"/>
    <property type="match status" value="1"/>
</dbReference>
<reference key="1">
    <citation type="submission" date="2007-05" db="EMBL/GenBank/DDBJ databases">
        <title>Complete sequence of Pseudomonas putida F1.</title>
        <authorList>
            <consortium name="US DOE Joint Genome Institute"/>
            <person name="Copeland A."/>
            <person name="Lucas S."/>
            <person name="Lapidus A."/>
            <person name="Barry K."/>
            <person name="Detter J.C."/>
            <person name="Glavina del Rio T."/>
            <person name="Hammon N."/>
            <person name="Israni S."/>
            <person name="Dalin E."/>
            <person name="Tice H."/>
            <person name="Pitluck S."/>
            <person name="Chain P."/>
            <person name="Malfatti S."/>
            <person name="Shin M."/>
            <person name="Vergez L."/>
            <person name="Schmutz J."/>
            <person name="Larimer F."/>
            <person name="Land M."/>
            <person name="Hauser L."/>
            <person name="Kyrpides N."/>
            <person name="Lykidis A."/>
            <person name="Parales R."/>
            <person name="Richardson P."/>
        </authorList>
    </citation>
    <scope>NUCLEOTIDE SEQUENCE [LARGE SCALE GENOMIC DNA]</scope>
    <source>
        <strain>ATCC 700007 / DSM 6899 / JCM 31910 / BCRC 17059 / LMG 24140 / F1</strain>
    </source>
</reference>
<sequence length="215" mass="23558">MSACLGFRELGLQPYEPVLEAMRRFTEQRSPDSQDEIWLVEHPAVFTQGQAGKAEHLLVPGDIPVVQTDRGGQVTYHGPGQLVAYLLLDVRRLGFGVRELVSRIELALIDLLASYAVQASAKPDAPGVYVDGAKIASLGLRIRNGRSFHGLALNVDMDLAPFRRINPCGYAGLAMTQLRDLAGPIELDEVRTRLRGQLVKHLDYAEQTTLTGGID</sequence>
<organism>
    <name type="scientific">Pseudomonas putida (strain ATCC 700007 / DSM 6899 / JCM 31910 / BCRC 17059 / LMG 24140 / F1)</name>
    <dbReference type="NCBI Taxonomy" id="351746"/>
    <lineage>
        <taxon>Bacteria</taxon>
        <taxon>Pseudomonadati</taxon>
        <taxon>Pseudomonadota</taxon>
        <taxon>Gammaproteobacteria</taxon>
        <taxon>Pseudomonadales</taxon>
        <taxon>Pseudomonadaceae</taxon>
        <taxon>Pseudomonas</taxon>
    </lineage>
</organism>
<proteinExistence type="inferred from homology"/>
<feature type="chain" id="PRO_1000001117" description="Octanoyltransferase">
    <location>
        <begin position="1"/>
        <end position="215"/>
    </location>
</feature>
<feature type="domain" description="BPL/LPL catalytic" evidence="2">
    <location>
        <begin position="31"/>
        <end position="206"/>
    </location>
</feature>
<feature type="active site" description="Acyl-thioester intermediate" evidence="1">
    <location>
        <position position="168"/>
    </location>
</feature>
<feature type="binding site" evidence="1">
    <location>
        <begin position="70"/>
        <end position="77"/>
    </location>
    <ligand>
        <name>substrate</name>
    </ligand>
</feature>
<feature type="binding site" evidence="1">
    <location>
        <begin position="137"/>
        <end position="139"/>
    </location>
    <ligand>
        <name>substrate</name>
    </ligand>
</feature>
<feature type="binding site" evidence="1">
    <location>
        <begin position="150"/>
        <end position="152"/>
    </location>
    <ligand>
        <name>substrate</name>
    </ligand>
</feature>
<feature type="site" description="Lowers pKa of active site Cys" evidence="1">
    <location>
        <position position="134"/>
    </location>
</feature>
<evidence type="ECO:0000255" key="1">
    <source>
        <dbReference type="HAMAP-Rule" id="MF_00013"/>
    </source>
</evidence>
<evidence type="ECO:0000255" key="2">
    <source>
        <dbReference type="PROSITE-ProRule" id="PRU01067"/>
    </source>
</evidence>
<comment type="function">
    <text evidence="1">Catalyzes the transfer of endogenously produced octanoic acid from octanoyl-acyl-carrier-protein onto the lipoyl domains of lipoate-dependent enzymes. Lipoyl-ACP can also act as a substrate although octanoyl-ACP is likely to be the physiological substrate.</text>
</comment>
<comment type="catalytic activity">
    <reaction evidence="1">
        <text>octanoyl-[ACP] + L-lysyl-[protein] = N(6)-octanoyl-L-lysyl-[protein] + holo-[ACP] + H(+)</text>
        <dbReference type="Rhea" id="RHEA:17665"/>
        <dbReference type="Rhea" id="RHEA-COMP:9636"/>
        <dbReference type="Rhea" id="RHEA-COMP:9685"/>
        <dbReference type="Rhea" id="RHEA-COMP:9752"/>
        <dbReference type="Rhea" id="RHEA-COMP:9928"/>
        <dbReference type="ChEBI" id="CHEBI:15378"/>
        <dbReference type="ChEBI" id="CHEBI:29969"/>
        <dbReference type="ChEBI" id="CHEBI:64479"/>
        <dbReference type="ChEBI" id="CHEBI:78463"/>
        <dbReference type="ChEBI" id="CHEBI:78809"/>
        <dbReference type="EC" id="2.3.1.181"/>
    </reaction>
</comment>
<comment type="pathway">
    <text evidence="1">Protein modification; protein lipoylation via endogenous pathway; protein N(6)-(lipoyl)lysine from octanoyl-[acyl-carrier-protein]: step 1/2.</text>
</comment>
<comment type="subcellular location">
    <subcellularLocation>
        <location evidence="1">Cytoplasm</location>
    </subcellularLocation>
</comment>
<comment type="miscellaneous">
    <text evidence="1">In the reaction, the free carboxyl group of octanoic acid is attached via an amide linkage to the epsilon-amino group of a specific lysine residue of lipoyl domains of lipoate-dependent enzymes.</text>
</comment>
<comment type="similarity">
    <text evidence="1">Belongs to the LipB family.</text>
</comment>
<protein>
    <recommendedName>
        <fullName evidence="1">Octanoyltransferase</fullName>
        <ecNumber evidence="1">2.3.1.181</ecNumber>
    </recommendedName>
    <alternativeName>
        <fullName evidence="1">Lipoate-protein ligase B</fullName>
    </alternativeName>
    <alternativeName>
        <fullName evidence="1">Lipoyl/octanoyl transferase</fullName>
    </alternativeName>
    <alternativeName>
        <fullName evidence="1">Octanoyl-[acyl-carrier-protein]-protein N-octanoyltransferase</fullName>
    </alternativeName>
</protein>
<accession>A5W9I6</accession>
<gene>
    <name evidence="1" type="primary">lipB</name>
    <name type="ordered locus">Pput_4676</name>
</gene>
<name>LIPB_PSEP1</name>
<keyword id="KW-0012">Acyltransferase</keyword>
<keyword id="KW-0963">Cytoplasm</keyword>
<keyword id="KW-0808">Transferase</keyword>